<organism>
    <name type="scientific">Sodalis glossinidius (strain morsitans)</name>
    <dbReference type="NCBI Taxonomy" id="343509"/>
    <lineage>
        <taxon>Bacteria</taxon>
        <taxon>Pseudomonadati</taxon>
        <taxon>Pseudomonadota</taxon>
        <taxon>Gammaproteobacteria</taxon>
        <taxon>Enterobacterales</taxon>
        <taxon>Bruguierivoracaceae</taxon>
        <taxon>Sodalis</taxon>
    </lineage>
</organism>
<reference key="1">
    <citation type="journal article" date="2006" name="Genome Res.">
        <title>Massive genome erosion and functional adaptations provide insights into the symbiotic lifestyle of Sodalis glossinidius in the tsetse host.</title>
        <authorList>
            <person name="Toh H."/>
            <person name="Weiss B.L."/>
            <person name="Perkin S.A.H."/>
            <person name="Yamashita A."/>
            <person name="Oshima K."/>
            <person name="Hattori M."/>
            <person name="Aksoy S."/>
        </authorList>
    </citation>
    <scope>NUCLEOTIDE SEQUENCE [LARGE SCALE GENOMIC DNA]</scope>
    <source>
        <strain>morsitans</strain>
    </source>
</reference>
<feature type="chain" id="PRO_0000244169" description="Ribosome maturation factor RimM">
    <location>
        <begin position="1"/>
        <end position="185"/>
    </location>
</feature>
<feature type="domain" description="PRC barrel" evidence="1">
    <location>
        <begin position="106"/>
        <end position="185"/>
    </location>
</feature>
<protein>
    <recommendedName>
        <fullName evidence="1">Ribosome maturation factor RimM</fullName>
    </recommendedName>
</protein>
<sequence length="185" mass="20910">MVKMSKQLRIAAPVEPVVVGKMGSAYGIRGWLRVFSSTEEAESIFDYQPWFIKRAREWQPIGLESWKRHNQDLIIKVRDIEDREAATLLTNCEIVVDASQLPDLDSGEYYWKDLLGCQVVTVGGYQLGEVIDLMETGSNDVLVVKANLKDAFGIQERLIPFLDGKVIKNVDLAAHIIEVDWDPGF</sequence>
<accession>Q2NVK3</accession>
<keyword id="KW-0143">Chaperone</keyword>
<keyword id="KW-0963">Cytoplasm</keyword>
<keyword id="KW-0690">Ribosome biogenesis</keyword>
<keyword id="KW-0698">rRNA processing</keyword>
<gene>
    <name evidence="1" type="primary">rimM</name>
    <name type="ordered locus">SG0547</name>
</gene>
<proteinExistence type="inferred from homology"/>
<dbReference type="EMBL" id="AP008232">
    <property type="protein sequence ID" value="BAE73822.1"/>
    <property type="molecule type" value="Genomic_DNA"/>
</dbReference>
<dbReference type="SMR" id="Q2NVK3"/>
<dbReference type="STRING" id="343509.SG0547"/>
<dbReference type="KEGG" id="sgl:SG0547"/>
<dbReference type="eggNOG" id="COG0806">
    <property type="taxonomic scope" value="Bacteria"/>
</dbReference>
<dbReference type="HOGENOM" id="CLU_077636_1_0_6"/>
<dbReference type="Proteomes" id="UP000001932">
    <property type="component" value="Chromosome"/>
</dbReference>
<dbReference type="GO" id="GO:0005737">
    <property type="term" value="C:cytoplasm"/>
    <property type="evidence" value="ECO:0007669"/>
    <property type="project" value="UniProtKB-SubCell"/>
</dbReference>
<dbReference type="GO" id="GO:0005840">
    <property type="term" value="C:ribosome"/>
    <property type="evidence" value="ECO:0007669"/>
    <property type="project" value="InterPro"/>
</dbReference>
<dbReference type="GO" id="GO:0043022">
    <property type="term" value="F:ribosome binding"/>
    <property type="evidence" value="ECO:0007669"/>
    <property type="project" value="InterPro"/>
</dbReference>
<dbReference type="GO" id="GO:0042274">
    <property type="term" value="P:ribosomal small subunit biogenesis"/>
    <property type="evidence" value="ECO:0007669"/>
    <property type="project" value="UniProtKB-UniRule"/>
</dbReference>
<dbReference type="GO" id="GO:0006364">
    <property type="term" value="P:rRNA processing"/>
    <property type="evidence" value="ECO:0007669"/>
    <property type="project" value="UniProtKB-UniRule"/>
</dbReference>
<dbReference type="FunFam" id="2.40.30.60:FF:000001">
    <property type="entry name" value="Ribosome maturation factor RimM"/>
    <property type="match status" value="1"/>
</dbReference>
<dbReference type="Gene3D" id="2.30.30.240">
    <property type="entry name" value="PRC-barrel domain"/>
    <property type="match status" value="1"/>
</dbReference>
<dbReference type="Gene3D" id="2.40.30.60">
    <property type="entry name" value="RimM"/>
    <property type="match status" value="1"/>
</dbReference>
<dbReference type="HAMAP" id="MF_00014">
    <property type="entry name" value="Ribosome_mat_RimM"/>
    <property type="match status" value="1"/>
</dbReference>
<dbReference type="InterPro" id="IPR011033">
    <property type="entry name" value="PRC_barrel-like_sf"/>
</dbReference>
<dbReference type="InterPro" id="IPR056792">
    <property type="entry name" value="PRC_RimM"/>
</dbReference>
<dbReference type="InterPro" id="IPR011961">
    <property type="entry name" value="RimM"/>
</dbReference>
<dbReference type="InterPro" id="IPR002676">
    <property type="entry name" value="RimM_N"/>
</dbReference>
<dbReference type="InterPro" id="IPR036976">
    <property type="entry name" value="RimM_N_sf"/>
</dbReference>
<dbReference type="InterPro" id="IPR009000">
    <property type="entry name" value="Transl_B-barrel_sf"/>
</dbReference>
<dbReference type="NCBIfam" id="TIGR02273">
    <property type="entry name" value="16S_RimM"/>
    <property type="match status" value="1"/>
</dbReference>
<dbReference type="PANTHER" id="PTHR33692">
    <property type="entry name" value="RIBOSOME MATURATION FACTOR RIMM"/>
    <property type="match status" value="1"/>
</dbReference>
<dbReference type="PANTHER" id="PTHR33692:SF1">
    <property type="entry name" value="RIBOSOME MATURATION FACTOR RIMM"/>
    <property type="match status" value="1"/>
</dbReference>
<dbReference type="Pfam" id="PF24986">
    <property type="entry name" value="PRC_RimM"/>
    <property type="match status" value="1"/>
</dbReference>
<dbReference type="Pfam" id="PF01782">
    <property type="entry name" value="RimM"/>
    <property type="match status" value="1"/>
</dbReference>
<dbReference type="SUPFAM" id="SSF50346">
    <property type="entry name" value="PRC-barrel domain"/>
    <property type="match status" value="1"/>
</dbReference>
<dbReference type="SUPFAM" id="SSF50447">
    <property type="entry name" value="Translation proteins"/>
    <property type="match status" value="1"/>
</dbReference>
<comment type="function">
    <text evidence="1">An accessory protein needed during the final step in the assembly of 30S ribosomal subunit, possibly for assembly of the head region. Essential for efficient processing of 16S rRNA. May be needed both before and after RbfA during the maturation of 16S rRNA. It has affinity for free ribosomal 30S subunits but not for 70S ribosomes.</text>
</comment>
<comment type="subunit">
    <text evidence="1">Binds ribosomal protein uS19.</text>
</comment>
<comment type="subcellular location">
    <subcellularLocation>
        <location evidence="1">Cytoplasm</location>
    </subcellularLocation>
</comment>
<comment type="domain">
    <text evidence="1">The PRC barrel domain binds ribosomal protein uS19.</text>
</comment>
<comment type="similarity">
    <text evidence="1">Belongs to the RimM family.</text>
</comment>
<name>RIMM_SODGM</name>
<evidence type="ECO:0000255" key="1">
    <source>
        <dbReference type="HAMAP-Rule" id="MF_00014"/>
    </source>
</evidence>